<feature type="chain" id="PRO_0000452507" description="Polyketide synthase ThaH">
    <location>
        <begin position="1"/>
        <end position="3925"/>
    </location>
</feature>
<feature type="domain" description="Carrier 1" evidence="1">
    <location>
        <begin position="1073"/>
        <end position="1148"/>
    </location>
</feature>
<feature type="domain" description="Ketosynthase family 3 (KS3) 1" evidence="2">
    <location>
        <begin position="1237"/>
        <end position="1667"/>
    </location>
</feature>
<feature type="domain" description="PKS/mFAS DH" evidence="3">
    <location>
        <begin position="1844"/>
        <end position="2143"/>
    </location>
</feature>
<feature type="domain" description="Carrier 2" evidence="1">
    <location>
        <begin position="2664"/>
        <end position="2737"/>
    </location>
</feature>
<feature type="domain" description="Ketosynthase family 3 (KS3) 2" evidence="2">
    <location>
        <begin position="2847"/>
        <end position="3286"/>
    </location>
</feature>
<feature type="domain" description="Carrier 3" evidence="1">
    <location>
        <begin position="3622"/>
        <end position="3699"/>
    </location>
</feature>
<feature type="domain" description="Carrier 4" evidence="1">
    <location>
        <begin position="3762"/>
        <end position="3839"/>
    </location>
</feature>
<feature type="region of interest" description="Disordered" evidence="4">
    <location>
        <begin position="1"/>
        <end position="56"/>
    </location>
</feature>
<feature type="region of interest" description="Disordered" evidence="4">
    <location>
        <begin position="1166"/>
        <end position="1233"/>
    </location>
</feature>
<feature type="region of interest" description="Disordered" evidence="4">
    <location>
        <begin position="1679"/>
        <end position="1698"/>
    </location>
</feature>
<feature type="region of interest" description="N-terminal hotdog fold" evidence="3">
    <location>
        <begin position="1844"/>
        <end position="1969"/>
    </location>
</feature>
<feature type="region of interest" description="C-terminal hotdog fold" evidence="3">
    <location>
        <begin position="1983"/>
        <end position="2143"/>
    </location>
</feature>
<feature type="region of interest" description="Disordered" evidence="4">
    <location>
        <begin position="2594"/>
        <end position="2613"/>
    </location>
</feature>
<feature type="region of interest" description="Disordered" evidence="4">
    <location>
        <begin position="2619"/>
        <end position="2657"/>
    </location>
</feature>
<feature type="region of interest" description="Disordered" evidence="4">
    <location>
        <begin position="2753"/>
        <end position="2841"/>
    </location>
</feature>
<feature type="region of interest" description="Disordered" evidence="4">
    <location>
        <begin position="3512"/>
        <end position="3531"/>
    </location>
</feature>
<feature type="region of interest" description="Disordered" evidence="4">
    <location>
        <begin position="3578"/>
        <end position="3619"/>
    </location>
</feature>
<feature type="region of interest" description="Disordered" evidence="4">
    <location>
        <begin position="3734"/>
        <end position="3754"/>
    </location>
</feature>
<feature type="compositionally biased region" description="Basic residues" evidence="4">
    <location>
        <begin position="17"/>
        <end position="49"/>
    </location>
</feature>
<feature type="compositionally biased region" description="Low complexity" evidence="4">
    <location>
        <begin position="1166"/>
        <end position="1182"/>
    </location>
</feature>
<feature type="compositionally biased region" description="Basic and acidic residues" evidence="4">
    <location>
        <begin position="1183"/>
        <end position="1196"/>
    </location>
</feature>
<feature type="compositionally biased region" description="Low complexity" evidence="4">
    <location>
        <begin position="1202"/>
        <end position="1216"/>
    </location>
</feature>
<feature type="compositionally biased region" description="Low complexity" evidence="4">
    <location>
        <begin position="2594"/>
        <end position="2607"/>
    </location>
</feature>
<feature type="compositionally biased region" description="Low complexity" evidence="4">
    <location>
        <begin position="2632"/>
        <end position="2646"/>
    </location>
</feature>
<feature type="compositionally biased region" description="Low complexity" evidence="4">
    <location>
        <begin position="2753"/>
        <end position="2768"/>
    </location>
</feature>
<feature type="compositionally biased region" description="Basic and acidic residues" evidence="4">
    <location>
        <begin position="2770"/>
        <end position="2779"/>
    </location>
</feature>
<feature type="compositionally biased region" description="Low complexity" evidence="4">
    <location>
        <begin position="2789"/>
        <end position="2813"/>
    </location>
</feature>
<feature type="compositionally biased region" description="Low complexity" evidence="4">
    <location>
        <begin position="2823"/>
        <end position="2841"/>
    </location>
</feature>
<feature type="compositionally biased region" description="Low complexity" evidence="4">
    <location>
        <begin position="3512"/>
        <end position="3524"/>
    </location>
</feature>
<feature type="compositionally biased region" description="Low complexity" evidence="4">
    <location>
        <begin position="3578"/>
        <end position="3592"/>
    </location>
</feature>
<feature type="compositionally biased region" description="Pro residues" evidence="4">
    <location>
        <begin position="3593"/>
        <end position="3603"/>
    </location>
</feature>
<feature type="compositionally biased region" description="Low complexity" evidence="4">
    <location>
        <begin position="3604"/>
        <end position="3619"/>
    </location>
</feature>
<feature type="active site" description="For beta-ketoacyl synthase 1 activity" evidence="2">
    <location>
        <position position="1413"/>
    </location>
</feature>
<feature type="active site" description="For beta-ketoacyl synthase 1 activity" evidence="2">
    <location>
        <position position="1549"/>
    </location>
</feature>
<feature type="active site" description="For beta-ketoacyl synthase 1 activity" evidence="2">
    <location>
        <position position="1589"/>
    </location>
</feature>
<feature type="active site" description="Proton acceptor; for dehydratase activity" evidence="3">
    <location>
        <position position="1873"/>
    </location>
</feature>
<feature type="active site" description="Proton donor; for dehydratase activity" evidence="3">
    <location>
        <position position="2043"/>
    </location>
</feature>
<feature type="active site" description="For beta-ketoacyl synthase 2 activity" evidence="2">
    <location>
        <position position="3022"/>
    </location>
</feature>
<feature type="active site" description="For beta-ketoacyl synthase 2 activity" evidence="2">
    <location>
        <position position="3157"/>
    </location>
</feature>
<feature type="active site" description="For beta-ketoacyl synthase 2 activity" evidence="2">
    <location>
        <position position="3197"/>
    </location>
</feature>
<feature type="modified residue" description="O-(pantetheine 4'-phosphoryl)serine" evidence="1">
    <location>
        <position position="1108"/>
    </location>
</feature>
<feature type="modified residue" description="O-(pantetheine 4'-phosphoryl)serine" evidence="1">
    <location>
        <position position="2698"/>
    </location>
</feature>
<feature type="modified residue" description="O-(pantetheine 4'-phosphoryl)serine" evidence="1">
    <location>
        <position position="3659"/>
    </location>
</feature>
<feature type="modified residue" description="O-(pantetheine 4'-phosphoryl)serine" evidence="1">
    <location>
        <position position="3799"/>
    </location>
</feature>
<keyword id="KW-0045">Antibiotic biosynthesis</keyword>
<keyword id="KW-0963">Cytoplasm</keyword>
<keyword id="KW-0479">Metal-binding</keyword>
<keyword id="KW-0511">Multifunctional enzyme</keyword>
<keyword id="KW-0596">Phosphopantetheine</keyword>
<keyword id="KW-0597">Phosphoprotein</keyword>
<keyword id="KW-0677">Repeat</keyword>
<keyword id="KW-0808">Transferase</keyword>
<accession>Q2T4N2</accession>
<organism>
    <name type="scientific">Burkholderia thailandensis (strain ATCC 700388 / DSM 13276 / CCUG 48851 / CIP 106301 / E264)</name>
    <dbReference type="NCBI Taxonomy" id="271848"/>
    <lineage>
        <taxon>Bacteria</taxon>
        <taxon>Pseudomonadati</taxon>
        <taxon>Pseudomonadota</taxon>
        <taxon>Betaproteobacteria</taxon>
        <taxon>Burkholderiales</taxon>
        <taxon>Burkholderiaceae</taxon>
        <taxon>Burkholderia</taxon>
        <taxon>pseudomallei group</taxon>
    </lineage>
</organism>
<sequence length="3925" mass="410741">MPRWRPTWLKRLSCPKQPRHPTHPKHPTHPKHPKHPKHPRHPKHPRISRRCSSASARGKWISTTSSTWFDGDHVNKKDILLAYREGLLDTGSAQRVLDALRERSASAPLSSVEQGIWATQRAAPGSTAYHVPVVLHVARALDIDALRRACLDLALAFPILTSTIVERDGEPRRAAFSSAPAQLRHERVGALSDDALAARLADAKREPFDLRAGPLWRLFAFERGRADFVLMLVVHHLSYDGASTLPLVDTLLAMHDARAAGATPAIEPFAPAHDAYVADEARWLASADAAATLDYWRRALDGAPPALELPLDRPRPAQQTFNGKVVQRALPEVLGERAAAFAAQGGLTRAALFLAVFKLLLSRYAAQDDIVVGVPVSRRPLAARGAVGNFVNLLPLRSRVDARLTFAAFAAQVQGTLNAGRDHAAYPFPELVKRLNVPRDAALAPVFQALFAYQNFAGADAEAAFCARHRARFLQIEHQAGESEIGVEVFERASASVVHLKFNPDLFDDASAARMLDHFVHLLDATLADPRRPLADYPLVTPAERERIVSRWNATAAPYPDDRCLHELVDEHARTRADARAVSDARDALGFGELKRRSDAIAAALVDAGAAPRALVGVCMTRSVDLLAALIGVMKAGAAYVPLDPRYPDARLRAIVDDAQLEHVLTDAESAPVAAPLCADGARVMLDAARCAAGGSRAPLPRATPDDLAYVIYTSGSTGKPKGVMVPHRAVVNLLCSMARAPGMAAGERMLALATYAFDMSVPELFLPLAVGGECMLAQADAARDPRVLMEAIAERRPTIMQITPTACAMLFEAGWRNAERVALLCGAEPLTETVRRRLAETGTRAWNMYGPTETTVWSTMAPIAADRPITLGAPLANTRVYIVDGQDRLLPPGLYGEMVIAGDGVARGYLGRPELSAERFVRDPFVNAGRGANAYRTGDIARWRDDGSLEFAGRSDAQVKLRGFRIELGDIEAHLKRHPAIEDAVAVVNEAHGLKRLVGYVVVRGGAAAPSWSALRSWLLAALPAHMVPACYEALPAVPLTPNGKIDRRGLAARPLAAAAGAQAADGLEAGGLVGGLEGEVLALWRETLKVGDIGPTDGFFDAGGDSILAVALAARIEQRFGVTFSATTLFKYACVRDIAGYIASAEARPRAGGANARAGVEAGAAVATPPGRPAGEAAGAQRDRAPRAADERADAPPAAPSDAHASKAAAIDSRGGAAGGDGEPARAASHGDAPADGLAIIGIALRVPGAADARAFWRNLREGRSALERLDARRLMAHGVASALAGARQTVGVRATIADKHRFDAEFFGVSMRDAALMDPQARQLLQHAWLAFEDAGYVPADAPDTAVFVSASHSRYAAKQADGARAAAEAVLDDPADYVGWILEQGGTIPALISYKLGLTGPSLYVHTNCSSSLAALYAAWQTIRAGDAKQALVAAATLFADERLGYVHQPGLNFSSDGRIKTFDRNADGMVPGEGVVAVLVKRVAEALADGDRIYAIVRDVALNNDGAAKAGFYAPSVRGQAQVIDALLRRTGVRAADIVYVEAHGTGTQIGDPIEVAALTDAYRAHGAGTGHCGLGSVKTNVGHLDTAAGLVGLVKVALSLEQRMLPPSLNFDAPNPALDLASSPFYVVERATPIAPRAGRTFAAVSAFGVGGTNAHALVEAHRDARDAAIATGATGAPDVPDAPDAPDAPDAQTVVPLSAKTPAQLTQRAAQLLDALRGDDARRPALADVAFTLQRGRQPMGSRAAFVVDSIDMLCEQLAAYVAAGGAHAPRGAARADATHAHAGDAHRLAERWVAGDDVDWRALSRGGRRIGLPGYPFGGDVYGGARDAHDPSRRLHPLLHRNVSTLSQVAFTSTFDGGEPFLRDHLLHGRRVLPGAAYLEMIHAAAERALAPAAGAGAGVALANVVWVRPVEVVDASVTVRLAFAPADDDGLVAFEIRSETAGGGGALHCRGHVQRIAEPAPGQIDLHALRERCAAPRLSAARCYETYARLGLDYGPSHRGVVDVRGEREHLLARIVLAGLPDADARPMHAGLVDSAFQATLAAVAETPDELERLDAAPVPFALGRLDVLAPCAPQMWASIRVRRIGGAHADGGRTASDDALLAKIDIDLVDDAGNVCVRVRDLAARRFVREPARAPSRTLAVRARWRGARASGVPGASGGVPREVVLVGVDARAAEPIRAALGASGVACEVWPIPADADPAGQFAALAARVLERLQAAVRARPTSPRLLQLVSLDDAPWFAAALAAMLKTAALEQPCVLGQQIALPSRLSPARIAAALADCAAMPDARRLRFGANDADADADGALEVETFAELDAWPEQAAPPWKAGGVYLVTGGGGRIARRLIDAIAAHAANATVVVASRTQPGAARADARHATDASDTPHAPGVTVDRIALDVTDGARVRDAVRSIVSRHGRLDGVLHGAGVLDDDFILNKDARALHAVIAPKAQGAWHLDAATASLDLDCFVLFSSVAGALGNAGQVDYSGANAFMDAFAHWRRARVAAGERRGRTVSIGWPLWAEGGMRIDDASLAALERSLGMRPMPTPAAIGALYAALACGESHVVLFHGDPAPLRRAAWLAASAPTQDDPAAASIEPAASSTELPEMNVQATAPADAGARPRDDAPAAAVAHAAPDASDAPDARPADAAPADDARLTEHALALLKRLLSTALHTPASRLDAHAPLERYGIDSIVVVSMNGELEKAFGSLSKTLFFEYRTLHELACYFVAHHRERLARLLPAGHGARLAPAPAQPLAPRAPSAEPARDAARSLEPEQGQGQGQGQEPEPASQTAAASESARAPAQASAHARRERAAPETRTQAPAQAHAPAQASAPDAARDAFDIAIVGLAGRYPGADSVDAFWANLRDGRDCVTEVPAERWDHARYFHPDKAHPGTTYAKWGGFVDGVDRFDAAFFNMSPREAAIVDPQERLFLETVYEAIEDAGYTPRTLAGGAGRDAAVGVYVGVMYQEYQLYGAQASALGEPCALPSSPSSIANRVSFFCDFDGPSIAVDTMCSSSLTAIHLACQSLRSGECAAAVAGGVNLTLHPNKYLLLSFGRFASSKGRCESFGAGGDGYVPAEGVGAVVLKPLARARADGDHVYGVIKGSALNHGGRTNGFTVPNPASQRRVILRALREAGVDPRRLGYVEAHGTGTSLGDPIEIDALSRAFAEFTQDKQFCPIGSVKSNIGHAESAAGVAALTKVLMQLKHDTLAPSLHADVLNPNIDFAATPFYVQRERADWPPAVDAGEAGGVARRRPRVCAVSSFGAGGSNAHLIVEEYVASDGERAVRSASDQLVVLSARSPEQLRERARRLRARLLADAGGTPLDALAYTLQVGREAMAYRFATIVATRDALAARLDALANDALFDGQALPGDADGFARRAERDETLVSLARDDAFRDAVGRWVAEGQLARLAQLWVRGVDLDWTLLHRSPPARISLPTYPFKRDRHWGVPNLAGLPGAAGVANVAGVAGAAGPAGVEHAASGAGAASVASAAGAASAASTASTASRAGTPSPAVAASTGETVAAPASHDAFATAGAKPGVVLAPATAAGYVATPRPKPTVMLDTDAAAAARARPGAASSPSPSSPSPLPSSPPRMSSRQHASPAAAPDPRAALLDIEAFLAGSLAAALMATTDEIDREQTFNALGVDSIVGVEWVRAINDRYGTALPATVIYDHPSVRAMARHVSSNATPGVAGVARGDASAPQAAPSAFAAAASSASGAVSPAPFASAAPPEPPASPARADGALDAAGATSLDAIRAHLVDSLAQALYVEPAEIGVDQPFAELGLDSIVGVEWITAVNRRFGTALPAVAIYDHPSVVALARFVGTQLGARLPAAQAARAGAFAGVEPGEPDARALPAAARAAAPPAHTDAAAHTDTDALLRAIERGELDAGDADAIWRRMQSRAARPEPLAQP</sequence>
<gene>
    <name evidence="6" type="primary">thaH</name>
    <name type="ordered locus">BTH_II1673</name>
</gene>
<dbReference type="EMBL" id="CP000085">
    <property type="protein sequence ID" value="ABC35522.1"/>
    <property type="molecule type" value="Genomic_DNA"/>
</dbReference>
<dbReference type="SMR" id="Q2T4N2"/>
<dbReference type="KEGG" id="bte:BTH_II1673"/>
<dbReference type="HOGENOM" id="CLU_000022_58_5_4"/>
<dbReference type="Proteomes" id="UP000001930">
    <property type="component" value="Chromosome II"/>
</dbReference>
<dbReference type="GO" id="GO:0005737">
    <property type="term" value="C:cytoplasm"/>
    <property type="evidence" value="ECO:0007669"/>
    <property type="project" value="UniProtKB-SubCell"/>
</dbReference>
<dbReference type="GO" id="GO:0005886">
    <property type="term" value="C:plasma membrane"/>
    <property type="evidence" value="ECO:0007669"/>
    <property type="project" value="TreeGrafter"/>
</dbReference>
<dbReference type="GO" id="GO:0004312">
    <property type="term" value="F:fatty acid synthase activity"/>
    <property type="evidence" value="ECO:0007669"/>
    <property type="project" value="TreeGrafter"/>
</dbReference>
<dbReference type="GO" id="GO:0046872">
    <property type="term" value="F:metal ion binding"/>
    <property type="evidence" value="ECO:0007669"/>
    <property type="project" value="UniProtKB-KW"/>
</dbReference>
<dbReference type="GO" id="GO:0031177">
    <property type="term" value="F:phosphopantetheine binding"/>
    <property type="evidence" value="ECO:0007669"/>
    <property type="project" value="InterPro"/>
</dbReference>
<dbReference type="GO" id="GO:0017000">
    <property type="term" value="P:antibiotic biosynthetic process"/>
    <property type="evidence" value="ECO:0007669"/>
    <property type="project" value="UniProtKB-KW"/>
</dbReference>
<dbReference type="GO" id="GO:0071770">
    <property type="term" value="P:DIM/DIP cell wall layer assembly"/>
    <property type="evidence" value="ECO:0007669"/>
    <property type="project" value="TreeGrafter"/>
</dbReference>
<dbReference type="GO" id="GO:0006633">
    <property type="term" value="P:fatty acid biosynthetic process"/>
    <property type="evidence" value="ECO:0007669"/>
    <property type="project" value="TreeGrafter"/>
</dbReference>
<dbReference type="GO" id="GO:0044550">
    <property type="term" value="P:secondary metabolite biosynthetic process"/>
    <property type="evidence" value="ECO:0007669"/>
    <property type="project" value="UniProtKB-ARBA"/>
</dbReference>
<dbReference type="CDD" id="cd08953">
    <property type="entry name" value="KR_2_SDR_x"/>
    <property type="match status" value="1"/>
</dbReference>
<dbReference type="CDD" id="cd00833">
    <property type="entry name" value="PKS"/>
    <property type="match status" value="2"/>
</dbReference>
<dbReference type="FunFam" id="3.40.50.12780:FF:000012">
    <property type="entry name" value="Non-ribosomal peptide synthetase"/>
    <property type="match status" value="1"/>
</dbReference>
<dbReference type="FunFam" id="3.40.50.980:FF:000001">
    <property type="entry name" value="Non-ribosomal peptide synthetase"/>
    <property type="match status" value="1"/>
</dbReference>
<dbReference type="FunFam" id="3.40.47.10:FF:000019">
    <property type="entry name" value="Polyketide synthase type I"/>
    <property type="match status" value="1"/>
</dbReference>
<dbReference type="Gene3D" id="1.10.1240.100">
    <property type="match status" value="2"/>
</dbReference>
<dbReference type="Gene3D" id="3.30.300.30">
    <property type="match status" value="1"/>
</dbReference>
<dbReference type="Gene3D" id="3.40.47.10">
    <property type="match status" value="2"/>
</dbReference>
<dbReference type="Gene3D" id="1.10.1200.10">
    <property type="entry name" value="ACP-like"/>
    <property type="match status" value="4"/>
</dbReference>
<dbReference type="Gene3D" id="3.30.559.10">
    <property type="entry name" value="Chloramphenicol acetyltransferase-like domain"/>
    <property type="match status" value="1"/>
</dbReference>
<dbReference type="Gene3D" id="3.40.50.12780">
    <property type="entry name" value="N-terminal domain of ligase-like"/>
    <property type="match status" value="1"/>
</dbReference>
<dbReference type="Gene3D" id="3.40.50.720">
    <property type="entry name" value="NAD(P)-binding Rossmann-like Domain"/>
    <property type="match status" value="1"/>
</dbReference>
<dbReference type="Gene3D" id="3.30.559.30">
    <property type="entry name" value="Nonribosomal peptide synthetase, condensation domain"/>
    <property type="match status" value="1"/>
</dbReference>
<dbReference type="Gene3D" id="3.10.129.110">
    <property type="entry name" value="Polyketide synthase dehydratase"/>
    <property type="match status" value="1"/>
</dbReference>
<dbReference type="InterPro" id="IPR010071">
    <property type="entry name" value="AA_adenyl_dom"/>
</dbReference>
<dbReference type="InterPro" id="IPR036736">
    <property type="entry name" value="ACP-like_sf"/>
</dbReference>
<dbReference type="InterPro" id="IPR025110">
    <property type="entry name" value="AMP-bd_C"/>
</dbReference>
<dbReference type="InterPro" id="IPR045851">
    <property type="entry name" value="AMP-bd_C_sf"/>
</dbReference>
<dbReference type="InterPro" id="IPR020845">
    <property type="entry name" value="AMP-binding_CS"/>
</dbReference>
<dbReference type="InterPro" id="IPR000873">
    <property type="entry name" value="AMP-dep_synth/lig_dom"/>
</dbReference>
<dbReference type="InterPro" id="IPR042099">
    <property type="entry name" value="ANL_N_sf"/>
</dbReference>
<dbReference type="InterPro" id="IPR023213">
    <property type="entry name" value="CAT-like_dom_sf"/>
</dbReference>
<dbReference type="InterPro" id="IPR001242">
    <property type="entry name" value="Condensatn"/>
</dbReference>
<dbReference type="InterPro" id="IPR014031">
    <property type="entry name" value="Ketoacyl_synth_C"/>
</dbReference>
<dbReference type="InterPro" id="IPR014030">
    <property type="entry name" value="Ketoacyl_synth_N"/>
</dbReference>
<dbReference type="InterPro" id="IPR036291">
    <property type="entry name" value="NAD(P)-bd_dom_sf"/>
</dbReference>
<dbReference type="InterPro" id="IPR020841">
    <property type="entry name" value="PKS_Beta-ketoAc_synthase_dom"/>
</dbReference>
<dbReference type="InterPro" id="IPR042104">
    <property type="entry name" value="PKS_dehydratase_sf"/>
</dbReference>
<dbReference type="InterPro" id="IPR020807">
    <property type="entry name" value="PKS_DH"/>
</dbReference>
<dbReference type="InterPro" id="IPR049551">
    <property type="entry name" value="PKS_DH_C"/>
</dbReference>
<dbReference type="InterPro" id="IPR049552">
    <property type="entry name" value="PKS_DH_N"/>
</dbReference>
<dbReference type="InterPro" id="IPR013968">
    <property type="entry name" value="PKS_KR"/>
</dbReference>
<dbReference type="InterPro" id="IPR049900">
    <property type="entry name" value="PKS_mFAS_DH"/>
</dbReference>
<dbReference type="InterPro" id="IPR050091">
    <property type="entry name" value="PKS_NRPS_Biosynth_Enz"/>
</dbReference>
<dbReference type="InterPro" id="IPR020806">
    <property type="entry name" value="PKS_PP-bd"/>
</dbReference>
<dbReference type="InterPro" id="IPR009081">
    <property type="entry name" value="PP-bd_ACP"/>
</dbReference>
<dbReference type="InterPro" id="IPR006162">
    <property type="entry name" value="Ppantetheine_attach_site"/>
</dbReference>
<dbReference type="InterPro" id="IPR054514">
    <property type="entry name" value="RhiE-like_linker"/>
</dbReference>
<dbReference type="InterPro" id="IPR016039">
    <property type="entry name" value="Thiolase-like"/>
</dbReference>
<dbReference type="NCBIfam" id="TIGR01733">
    <property type="entry name" value="AA-adenyl-dom"/>
    <property type="match status" value="1"/>
</dbReference>
<dbReference type="PANTHER" id="PTHR43775">
    <property type="entry name" value="FATTY ACID SYNTHASE"/>
    <property type="match status" value="1"/>
</dbReference>
<dbReference type="PANTHER" id="PTHR43775:SF37">
    <property type="entry name" value="SI:DKEY-61P9.11"/>
    <property type="match status" value="1"/>
</dbReference>
<dbReference type="Pfam" id="PF00501">
    <property type="entry name" value="AMP-binding"/>
    <property type="match status" value="1"/>
</dbReference>
<dbReference type="Pfam" id="PF13193">
    <property type="entry name" value="AMP-binding_C"/>
    <property type="match status" value="1"/>
</dbReference>
<dbReference type="Pfam" id="PF00668">
    <property type="entry name" value="Condensation"/>
    <property type="match status" value="1"/>
</dbReference>
<dbReference type="Pfam" id="PF00109">
    <property type="entry name" value="ketoacyl-synt"/>
    <property type="match status" value="2"/>
</dbReference>
<dbReference type="Pfam" id="PF02801">
    <property type="entry name" value="Ketoacyl-synt_C"/>
    <property type="match status" value="2"/>
</dbReference>
<dbReference type="Pfam" id="PF08659">
    <property type="entry name" value="KR"/>
    <property type="match status" value="1"/>
</dbReference>
<dbReference type="Pfam" id="PF21089">
    <property type="entry name" value="PKS_DH_N"/>
    <property type="match status" value="1"/>
</dbReference>
<dbReference type="Pfam" id="PF00550">
    <property type="entry name" value="PP-binding"/>
    <property type="match status" value="4"/>
</dbReference>
<dbReference type="Pfam" id="PF14765">
    <property type="entry name" value="PS-DH"/>
    <property type="match status" value="1"/>
</dbReference>
<dbReference type="Pfam" id="PF22336">
    <property type="entry name" value="RhiE-like_linker"/>
    <property type="match status" value="2"/>
</dbReference>
<dbReference type="SMART" id="SM00826">
    <property type="entry name" value="PKS_DH"/>
    <property type="match status" value="1"/>
</dbReference>
<dbReference type="SMART" id="SM00822">
    <property type="entry name" value="PKS_KR"/>
    <property type="match status" value="1"/>
</dbReference>
<dbReference type="SMART" id="SM00825">
    <property type="entry name" value="PKS_KS"/>
    <property type="match status" value="2"/>
</dbReference>
<dbReference type="SMART" id="SM00823">
    <property type="entry name" value="PKS_PP"/>
    <property type="match status" value="4"/>
</dbReference>
<dbReference type="SMART" id="SM01294">
    <property type="entry name" value="PKS_PP_betabranch"/>
    <property type="match status" value="3"/>
</dbReference>
<dbReference type="SUPFAM" id="SSF56801">
    <property type="entry name" value="Acetyl-CoA synthetase-like"/>
    <property type="match status" value="1"/>
</dbReference>
<dbReference type="SUPFAM" id="SSF47336">
    <property type="entry name" value="ACP-like"/>
    <property type="match status" value="4"/>
</dbReference>
<dbReference type="SUPFAM" id="SSF52777">
    <property type="entry name" value="CoA-dependent acyltransferases"/>
    <property type="match status" value="2"/>
</dbReference>
<dbReference type="SUPFAM" id="SSF51735">
    <property type="entry name" value="NAD(P)-binding Rossmann-fold domains"/>
    <property type="match status" value="1"/>
</dbReference>
<dbReference type="SUPFAM" id="SSF53901">
    <property type="entry name" value="Thiolase-like"/>
    <property type="match status" value="2"/>
</dbReference>
<dbReference type="PROSITE" id="PS00455">
    <property type="entry name" value="AMP_BINDING"/>
    <property type="match status" value="1"/>
</dbReference>
<dbReference type="PROSITE" id="PS50075">
    <property type="entry name" value="CARRIER"/>
    <property type="match status" value="4"/>
</dbReference>
<dbReference type="PROSITE" id="PS52004">
    <property type="entry name" value="KS3_2"/>
    <property type="match status" value="2"/>
</dbReference>
<dbReference type="PROSITE" id="PS00012">
    <property type="entry name" value="PHOSPHOPANTETHEINE"/>
    <property type="match status" value="3"/>
</dbReference>
<dbReference type="PROSITE" id="PS52019">
    <property type="entry name" value="PKS_MFAS_DH"/>
    <property type="match status" value="1"/>
</dbReference>
<evidence type="ECO:0000255" key="1">
    <source>
        <dbReference type="PROSITE-ProRule" id="PRU00258"/>
    </source>
</evidence>
<evidence type="ECO:0000255" key="2">
    <source>
        <dbReference type="PROSITE-ProRule" id="PRU01348"/>
    </source>
</evidence>
<evidence type="ECO:0000255" key="3">
    <source>
        <dbReference type="PROSITE-ProRule" id="PRU01363"/>
    </source>
</evidence>
<evidence type="ECO:0000256" key="4">
    <source>
        <dbReference type="SAM" id="MobiDB-lite"/>
    </source>
</evidence>
<evidence type="ECO:0000269" key="5">
    <source>
    </source>
</evidence>
<evidence type="ECO:0000303" key="6">
    <source>
    </source>
</evidence>
<evidence type="ECO:0000305" key="7"/>
<evidence type="ECO:0000305" key="8">
    <source>
    </source>
</evidence>
<evidence type="ECO:0000305" key="9">
    <source>
    </source>
</evidence>
<comment type="function">
    <text evidence="9">Involved in production of the polyketide antibiotic thailandamide.</text>
</comment>
<comment type="cofactor">
    <cofactor evidence="1">
        <name>pantetheine 4'-phosphate</name>
        <dbReference type="ChEBI" id="CHEBI:47942"/>
    </cofactor>
    <text evidence="1">Binds 4 phosphopantetheines covalently.</text>
</comment>
<comment type="pathway">
    <text evidence="8">Antibiotic biosynthesis.</text>
</comment>
<comment type="subcellular location">
    <subcellularLocation>
        <location evidence="7">Cytoplasm</location>
    </subcellularLocation>
</comment>
<comment type="disruption phenotype">
    <text evidence="5">No longer inhibits growth of Salmonella in an overlay assay, suggesting it does not produce thailandamide.</text>
</comment>
<comment type="miscellaneous">
    <text evidence="9">Thailandamide is a polyketide that is toxic to human cell lines but also has antibacterial activity on E.coli, S.typhimurium and S.aureus. It probably acts on acetyl-CoA carboxylase in the fatty acid synthesis pathway, which is rarely found to be an antibiotic target. These data suggest it might be a good starting point for engineering of novel antibiotics.</text>
</comment>
<comment type="similarity">
    <text evidence="7">Belongs to the ATP-dependent AMP-binding enzyme family.</text>
</comment>
<proteinExistence type="inferred from homology"/>
<name>THAH_BURTA</name>
<protein>
    <recommendedName>
        <fullName evidence="7">Polyketide synthase ThaH</fullName>
    </recommendedName>
</protein>
<reference key="1">
    <citation type="journal article" date="2005" name="BMC Genomics">
        <title>Bacterial genome adaptation to niches: divergence of the potential virulence genes in three Burkholderia species of different survival strategies.</title>
        <authorList>
            <person name="Kim H.S."/>
            <person name="Schell M.A."/>
            <person name="Yu Y."/>
            <person name="Ulrich R.L."/>
            <person name="Sarria S.H."/>
            <person name="Nierman W.C."/>
            <person name="DeShazer D."/>
        </authorList>
    </citation>
    <scope>NUCLEOTIDE SEQUENCE [LARGE SCALE GENOMIC DNA]</scope>
    <source>
        <strain>ATCC 700388 / DSM 13276 / CCUG 48851 / CIP 106301 / E264</strain>
    </source>
</reference>
<reference key="2">
    <citation type="journal article" date="2010" name="J. Am. Chem. Soc.">
        <title>Induced biosynthesis of cryptic polyketide metabolites in a Burkholderia thailandensis quorum sensing mutant.</title>
        <authorList>
            <person name="Ishida K."/>
            <person name="Lincke T."/>
            <person name="Behnken S."/>
            <person name="Hertweck C."/>
        </authorList>
    </citation>
    <scope>NOMENCLATURE</scope>
    <source>
        <strain>ATCC 700388 / DSM 13276 / CCUG 48851 / CIP 106301 / E264</strain>
    </source>
</reference>
<reference key="3">
    <citation type="journal article" date="2018" name="Antimicrob. Agents Chemother.">
        <title>Thailandamide, a Fatty Acid Synthesis Antibiotic That Is Coexpressed with a Resistant Target Gene.</title>
        <authorList>
            <person name="Wozniak C.E."/>
            <person name="Lin Z."/>
            <person name="Schmidt E.W."/>
            <person name="Hughes K.T."/>
            <person name="Liou T.G."/>
        </authorList>
    </citation>
    <scope>FUNCTION</scope>
    <scope>DISRUPTION PHENOTYPE</scope>
    <source>
        <strain>ATCC 700388 / DSM 13276 / CCUG 48851 / CIP 106301 / E264</strain>
    </source>
</reference>